<sequence length="241" mass="26309">MKNIDNPSEKIIIALDGMDKDDVVNLLKKIPEIVWVKVGLELFVSEGPDVLSMLREKGKKIFLDLKFHDIPTTVARACFAASQTGAEFISLHTCAGMKALKMANEAANEGASKVNLIPPKLLGITILTSWTRESFCNDLLINQSIDQRVKHLAEIASNSGLGGCVCSPKEVQFLRESYPETFELITPGIRSLGSNVNDQSRVSDASEAIKMGASKLVIGRAITQSNDSAYMFKSFCDKISI</sequence>
<comment type="function">
    <text evidence="1">Catalyzes the decarboxylation of orotidine 5'-monophosphate (OMP) to uridine 5'-monophosphate (UMP).</text>
</comment>
<comment type="catalytic activity">
    <reaction evidence="1">
        <text>orotidine 5'-phosphate + H(+) = UMP + CO2</text>
        <dbReference type="Rhea" id="RHEA:11596"/>
        <dbReference type="ChEBI" id="CHEBI:15378"/>
        <dbReference type="ChEBI" id="CHEBI:16526"/>
        <dbReference type="ChEBI" id="CHEBI:57538"/>
        <dbReference type="ChEBI" id="CHEBI:57865"/>
        <dbReference type="EC" id="4.1.1.23"/>
    </reaction>
</comment>
<comment type="pathway">
    <text evidence="1">Pyrimidine metabolism; UMP biosynthesis via de novo pathway; UMP from orotate: step 2/2.</text>
</comment>
<comment type="subunit">
    <text evidence="1">Homodimer.</text>
</comment>
<comment type="similarity">
    <text evidence="1">Belongs to the OMP decarboxylase family. Type 1 subfamily.</text>
</comment>
<dbReference type="EC" id="4.1.1.23" evidence="1"/>
<dbReference type="EMBL" id="CP000553">
    <property type="protein sequence ID" value="ABM76311.1"/>
    <property type="molecule type" value="Genomic_DNA"/>
</dbReference>
<dbReference type="RefSeq" id="WP_011824308.1">
    <property type="nucleotide sequence ID" value="NC_008819.1"/>
</dbReference>
<dbReference type="SMR" id="A2C4A1"/>
<dbReference type="KEGG" id="pme:NATL1_17551"/>
<dbReference type="eggNOG" id="COG0284">
    <property type="taxonomic scope" value="Bacteria"/>
</dbReference>
<dbReference type="HOGENOM" id="CLU_067069_1_0_3"/>
<dbReference type="UniPathway" id="UPA00070">
    <property type="reaction ID" value="UER00120"/>
</dbReference>
<dbReference type="Proteomes" id="UP000002592">
    <property type="component" value="Chromosome"/>
</dbReference>
<dbReference type="GO" id="GO:0005829">
    <property type="term" value="C:cytosol"/>
    <property type="evidence" value="ECO:0007669"/>
    <property type="project" value="TreeGrafter"/>
</dbReference>
<dbReference type="GO" id="GO:0004590">
    <property type="term" value="F:orotidine-5'-phosphate decarboxylase activity"/>
    <property type="evidence" value="ECO:0007669"/>
    <property type="project" value="UniProtKB-UniRule"/>
</dbReference>
<dbReference type="GO" id="GO:0006207">
    <property type="term" value="P:'de novo' pyrimidine nucleobase biosynthetic process"/>
    <property type="evidence" value="ECO:0007669"/>
    <property type="project" value="InterPro"/>
</dbReference>
<dbReference type="GO" id="GO:0044205">
    <property type="term" value="P:'de novo' UMP biosynthetic process"/>
    <property type="evidence" value="ECO:0007669"/>
    <property type="project" value="UniProtKB-UniRule"/>
</dbReference>
<dbReference type="CDD" id="cd04725">
    <property type="entry name" value="OMP_decarboxylase_like"/>
    <property type="match status" value="1"/>
</dbReference>
<dbReference type="Gene3D" id="3.20.20.70">
    <property type="entry name" value="Aldolase class I"/>
    <property type="match status" value="1"/>
</dbReference>
<dbReference type="HAMAP" id="MF_01200_B">
    <property type="entry name" value="OMPdecase_type1_B"/>
    <property type="match status" value="1"/>
</dbReference>
<dbReference type="InterPro" id="IPR013785">
    <property type="entry name" value="Aldolase_TIM"/>
</dbReference>
<dbReference type="InterPro" id="IPR014732">
    <property type="entry name" value="OMPdecase"/>
</dbReference>
<dbReference type="InterPro" id="IPR018089">
    <property type="entry name" value="OMPdecase_AS"/>
</dbReference>
<dbReference type="InterPro" id="IPR047596">
    <property type="entry name" value="OMPdecase_bac"/>
</dbReference>
<dbReference type="InterPro" id="IPR001754">
    <property type="entry name" value="OMPdeCOase_dom"/>
</dbReference>
<dbReference type="InterPro" id="IPR011060">
    <property type="entry name" value="RibuloseP-bd_barrel"/>
</dbReference>
<dbReference type="NCBIfam" id="NF001273">
    <property type="entry name" value="PRK00230.1"/>
    <property type="match status" value="1"/>
</dbReference>
<dbReference type="NCBIfam" id="TIGR01740">
    <property type="entry name" value="pyrF"/>
    <property type="match status" value="1"/>
</dbReference>
<dbReference type="PANTHER" id="PTHR32119">
    <property type="entry name" value="OROTIDINE 5'-PHOSPHATE DECARBOXYLASE"/>
    <property type="match status" value="1"/>
</dbReference>
<dbReference type="PANTHER" id="PTHR32119:SF2">
    <property type="entry name" value="OROTIDINE 5'-PHOSPHATE DECARBOXYLASE"/>
    <property type="match status" value="1"/>
</dbReference>
<dbReference type="Pfam" id="PF00215">
    <property type="entry name" value="OMPdecase"/>
    <property type="match status" value="1"/>
</dbReference>
<dbReference type="SMART" id="SM00934">
    <property type="entry name" value="OMPdecase"/>
    <property type="match status" value="1"/>
</dbReference>
<dbReference type="SUPFAM" id="SSF51366">
    <property type="entry name" value="Ribulose-phoshate binding barrel"/>
    <property type="match status" value="1"/>
</dbReference>
<dbReference type="PROSITE" id="PS00156">
    <property type="entry name" value="OMPDECASE"/>
    <property type="match status" value="1"/>
</dbReference>
<feature type="chain" id="PRO_1000065927" description="Orotidine 5'-phosphate decarboxylase">
    <location>
        <begin position="1"/>
        <end position="241"/>
    </location>
</feature>
<feature type="active site" description="Proton donor" evidence="1">
    <location>
        <position position="66"/>
    </location>
</feature>
<feature type="binding site" evidence="1">
    <location>
        <position position="16"/>
    </location>
    <ligand>
        <name>substrate</name>
    </ligand>
</feature>
<feature type="binding site" evidence="1">
    <location>
        <position position="37"/>
    </location>
    <ligand>
        <name>substrate</name>
    </ligand>
</feature>
<feature type="binding site" evidence="1">
    <location>
        <begin position="64"/>
        <end position="73"/>
    </location>
    <ligand>
        <name>substrate</name>
    </ligand>
</feature>
<feature type="binding site" evidence="1">
    <location>
        <position position="128"/>
    </location>
    <ligand>
        <name>substrate</name>
    </ligand>
</feature>
<feature type="binding site" evidence="1">
    <location>
        <position position="190"/>
    </location>
    <ligand>
        <name>substrate</name>
    </ligand>
</feature>
<feature type="binding site" evidence="1">
    <location>
        <position position="199"/>
    </location>
    <ligand>
        <name>substrate</name>
    </ligand>
</feature>
<feature type="binding site" evidence="1">
    <location>
        <position position="219"/>
    </location>
    <ligand>
        <name>substrate</name>
    </ligand>
</feature>
<feature type="binding site" evidence="1">
    <location>
        <position position="220"/>
    </location>
    <ligand>
        <name>substrate</name>
    </ligand>
</feature>
<gene>
    <name evidence="1" type="primary">pyrF</name>
    <name type="ordered locus">NATL1_17551</name>
</gene>
<protein>
    <recommendedName>
        <fullName evidence="1">Orotidine 5'-phosphate decarboxylase</fullName>
        <ecNumber evidence="1">4.1.1.23</ecNumber>
    </recommendedName>
    <alternativeName>
        <fullName evidence="1">OMP decarboxylase</fullName>
        <shortName evidence="1">OMPDCase</shortName>
        <shortName evidence="1">OMPdecase</shortName>
    </alternativeName>
</protein>
<evidence type="ECO:0000255" key="1">
    <source>
        <dbReference type="HAMAP-Rule" id="MF_01200"/>
    </source>
</evidence>
<organism>
    <name type="scientific">Prochlorococcus marinus (strain NATL1A)</name>
    <dbReference type="NCBI Taxonomy" id="167555"/>
    <lineage>
        <taxon>Bacteria</taxon>
        <taxon>Bacillati</taxon>
        <taxon>Cyanobacteriota</taxon>
        <taxon>Cyanophyceae</taxon>
        <taxon>Synechococcales</taxon>
        <taxon>Prochlorococcaceae</taxon>
        <taxon>Prochlorococcus</taxon>
    </lineage>
</organism>
<accession>A2C4A1</accession>
<name>PYRF_PROM1</name>
<keyword id="KW-0210">Decarboxylase</keyword>
<keyword id="KW-0456">Lyase</keyword>
<keyword id="KW-0665">Pyrimidine biosynthesis</keyword>
<reference key="1">
    <citation type="journal article" date="2007" name="PLoS Genet.">
        <title>Patterns and implications of gene gain and loss in the evolution of Prochlorococcus.</title>
        <authorList>
            <person name="Kettler G.C."/>
            <person name="Martiny A.C."/>
            <person name="Huang K."/>
            <person name="Zucker J."/>
            <person name="Coleman M.L."/>
            <person name="Rodrigue S."/>
            <person name="Chen F."/>
            <person name="Lapidus A."/>
            <person name="Ferriera S."/>
            <person name="Johnson J."/>
            <person name="Steglich C."/>
            <person name="Church G.M."/>
            <person name="Richardson P."/>
            <person name="Chisholm S.W."/>
        </authorList>
    </citation>
    <scope>NUCLEOTIDE SEQUENCE [LARGE SCALE GENOMIC DNA]</scope>
    <source>
        <strain>NATL1A</strain>
    </source>
</reference>
<proteinExistence type="inferred from homology"/>